<gene>
    <name type="primary">TTC23</name>
</gene>
<keyword id="KW-0966">Cell projection</keyword>
<keyword id="KW-1185">Reference proteome</keyword>
<keyword id="KW-0677">Repeat</keyword>
<keyword id="KW-0802">TPR repeat</keyword>
<name>TTC23_BOVIN</name>
<accession>Q2KHY7</accession>
<evidence type="ECO:0000250" key="1">
    <source>
        <dbReference type="UniProtKB" id="Q8CHY7"/>
    </source>
</evidence>
<evidence type="ECO:0000256" key="2">
    <source>
        <dbReference type="SAM" id="MobiDB-lite"/>
    </source>
</evidence>
<protein>
    <recommendedName>
        <fullName>Tetratricopeptide repeat protein 23</fullName>
        <shortName>TPR repeat protein 23</shortName>
    </recommendedName>
</protein>
<feature type="chain" id="PRO_0000289547" description="Tetratricopeptide repeat protein 23">
    <location>
        <begin position="1"/>
        <end position="446"/>
    </location>
</feature>
<feature type="repeat" description="TPR 1">
    <location>
        <begin position="45"/>
        <end position="78"/>
    </location>
</feature>
<feature type="repeat" description="TPR 2">
    <location>
        <begin position="137"/>
        <end position="170"/>
    </location>
</feature>
<feature type="repeat" description="TPR 3">
    <location>
        <begin position="186"/>
        <end position="219"/>
    </location>
</feature>
<feature type="repeat" description="TPR 4">
    <location>
        <begin position="310"/>
        <end position="347"/>
    </location>
</feature>
<feature type="repeat" description="TPR 5">
    <location>
        <begin position="356"/>
        <end position="389"/>
    </location>
</feature>
<feature type="region of interest" description="Disordered" evidence="2">
    <location>
        <begin position="410"/>
        <end position="446"/>
    </location>
</feature>
<sequence length="446" mass="49517">MQESQETHISNHLDEIVAAVSITPRKKLLNQLLQRALFQPPREKLRLSEEKAKSYASSHEYKKALHELVHCMALTRICYGDSHWKLAEAHVNLAKGYLQLKGMSLRAKQHAEKAKEILTSSVAPPYSDNTDVFKCSVELFHTLGQALLSLQKFKEASKNLTKAEILSKEMLQCGKIIKEEWMEIQARIKLSFAQVYQGQKKSKEALPHYQEALEYTEISRGEKSLECVPILRELAAAEQALGFHDASINNLIQAHLIVLRGSPSREEAATSAHSVACAAIASGRPEHHDVAEQYFQDSMANLKDAEGKETAKFLSIQDDYCHFLQVTGQDEKATSIFRESLEAKVAVFGDFSPEVAETYRLLGVADLAQGNQTGAHKKLKKCLQIQTLLYGPQDKRTLATQQTMDILSKAPEVPARPRPSPGAKAAFCAGGRPYSVPGRTRPSAAD</sequence>
<reference key="1">
    <citation type="submission" date="2006-01" db="EMBL/GenBank/DDBJ databases">
        <authorList>
            <consortium name="NIH - Mammalian Gene Collection (MGC) project"/>
        </authorList>
    </citation>
    <scope>NUCLEOTIDE SEQUENCE [LARGE SCALE MRNA]</scope>
    <source>
        <strain>Hereford</strain>
        <tissue>Heart ventricle</tissue>
    </source>
</reference>
<organism>
    <name type="scientific">Bos taurus</name>
    <name type="common">Bovine</name>
    <dbReference type="NCBI Taxonomy" id="9913"/>
    <lineage>
        <taxon>Eukaryota</taxon>
        <taxon>Metazoa</taxon>
        <taxon>Chordata</taxon>
        <taxon>Craniata</taxon>
        <taxon>Vertebrata</taxon>
        <taxon>Euteleostomi</taxon>
        <taxon>Mammalia</taxon>
        <taxon>Eutheria</taxon>
        <taxon>Laurasiatheria</taxon>
        <taxon>Artiodactyla</taxon>
        <taxon>Ruminantia</taxon>
        <taxon>Pecora</taxon>
        <taxon>Bovidae</taxon>
        <taxon>Bovinae</taxon>
        <taxon>Bos</taxon>
    </lineage>
</organism>
<dbReference type="EMBL" id="BC112835">
    <property type="protein sequence ID" value="AAI12836.1"/>
    <property type="molecule type" value="mRNA"/>
</dbReference>
<dbReference type="RefSeq" id="NP_001039771.1">
    <property type="nucleotide sequence ID" value="NM_001046306.2"/>
</dbReference>
<dbReference type="SMR" id="Q2KHY7"/>
<dbReference type="FunCoup" id="Q2KHY7">
    <property type="interactions" value="210"/>
</dbReference>
<dbReference type="STRING" id="9913.ENSBTAP00000014852"/>
<dbReference type="PaxDb" id="9913-ENSBTAP00000014852"/>
<dbReference type="GeneID" id="529791"/>
<dbReference type="KEGG" id="bta:529791"/>
<dbReference type="CTD" id="64927"/>
<dbReference type="eggNOG" id="ENOG502RQY0">
    <property type="taxonomic scope" value="Eukaryota"/>
</dbReference>
<dbReference type="InParanoid" id="Q2KHY7"/>
<dbReference type="OrthoDB" id="9986634at2759"/>
<dbReference type="Proteomes" id="UP000009136">
    <property type="component" value="Unplaced"/>
</dbReference>
<dbReference type="GO" id="GO:0005929">
    <property type="term" value="C:cilium"/>
    <property type="evidence" value="ECO:0000250"/>
    <property type="project" value="UniProtKB"/>
</dbReference>
<dbReference type="GO" id="GO:0045880">
    <property type="term" value="P:positive regulation of smoothened signaling pathway"/>
    <property type="evidence" value="ECO:0000250"/>
    <property type="project" value="UniProtKB"/>
</dbReference>
<dbReference type="Gene3D" id="1.25.40.10">
    <property type="entry name" value="Tetratricopeptide repeat domain"/>
    <property type="match status" value="3"/>
</dbReference>
<dbReference type="InterPro" id="IPR011990">
    <property type="entry name" value="TPR-like_helical_dom_sf"/>
</dbReference>
<dbReference type="InterPro" id="IPR019734">
    <property type="entry name" value="TPR_rpt"/>
</dbReference>
<dbReference type="InterPro" id="IPR042621">
    <property type="entry name" value="TTC23/TTC23L"/>
</dbReference>
<dbReference type="PANTHER" id="PTHR14485">
    <property type="entry name" value="TETRATRICOPEPTIDE REPEAT PROTEIN 23"/>
    <property type="match status" value="1"/>
</dbReference>
<dbReference type="PANTHER" id="PTHR14485:SF3">
    <property type="entry name" value="TETRATRICOPEPTIDE REPEAT PROTEIN 23"/>
    <property type="match status" value="1"/>
</dbReference>
<dbReference type="Pfam" id="PF13424">
    <property type="entry name" value="TPR_12"/>
    <property type="match status" value="1"/>
</dbReference>
<dbReference type="SMART" id="SM00028">
    <property type="entry name" value="TPR"/>
    <property type="match status" value="3"/>
</dbReference>
<dbReference type="SUPFAM" id="SSF48452">
    <property type="entry name" value="TPR-like"/>
    <property type="match status" value="1"/>
</dbReference>
<proteinExistence type="evidence at transcript level"/>
<comment type="function">
    <text evidence="1">Participates positively in the ciliary Hedgehog (Hh) signaling.</text>
</comment>
<comment type="subunit">
    <text evidence="1">Associated with the EvC complex composed of EFCAB7, IQCE, EVC2 and EVC.</text>
</comment>
<comment type="subcellular location">
    <subcellularLocation>
        <location evidence="1">Cell projection</location>
        <location evidence="1">Cilium</location>
    </subcellularLocation>
    <text evidence="1">Colocalizes with EVC and IQCE at the EvC zone of primary cilia.</text>
</comment>